<gene>
    <name type="primary">xynB</name>
</gene>
<comment type="function">
    <text>Active toward xylan, carboxymethylcellulose, P-nitrophenyl-beta-D-xylopyranoside and P-nitrophenyl-beta-D-cellobioside.</text>
</comment>
<comment type="catalytic activity">
    <reaction>
        <text>Endohydrolysis of (1-&gt;4)-beta-D-glucosidic linkages in cellulose, lichenin and cereal beta-D-glucans.</text>
        <dbReference type="EC" id="3.2.1.4"/>
    </reaction>
</comment>
<comment type="catalytic activity">
    <reaction>
        <text>Endohydrolysis of (1-&gt;4)-beta-D-xylosidic linkages in xylans.</text>
        <dbReference type="EC" id="3.2.1.8"/>
    </reaction>
</comment>
<comment type="biophysicochemical properties">
    <phDependence>
        <text>Optimum pH is 7.0.</text>
    </phDependence>
    <temperatureDependence>
        <text>Optimum temperature is 80 degrees Celsius.</text>
    </temperatureDependence>
</comment>
<comment type="pathway">
    <text>Glycan degradation; xylan degradation.</text>
</comment>
<comment type="similarity">
    <text evidence="4">Belongs to the glycosyl hydrolase 10 (cellulase F) family.</text>
</comment>
<organism>
    <name type="scientific">Thermoclostridium stercorarium</name>
    <name type="common">Clostridium stercorarium</name>
    <dbReference type="NCBI Taxonomy" id="1510"/>
    <lineage>
        <taxon>Bacteria</taxon>
        <taxon>Bacillati</taxon>
        <taxon>Bacillota</taxon>
        <taxon>Clostridia</taxon>
        <taxon>Eubacteriales</taxon>
        <taxon>Oscillospiraceae</taxon>
        <taxon>Thermoclostridium</taxon>
    </lineage>
</organism>
<dbReference type="EC" id="3.2.1.4"/>
<dbReference type="EC" id="3.2.1.8"/>
<dbReference type="EMBL" id="D12504">
    <property type="protein sequence ID" value="BAA02069.1"/>
    <property type="molecule type" value="Genomic_DNA"/>
</dbReference>
<dbReference type="PIR" id="JC2484">
    <property type="entry name" value="JC2484"/>
</dbReference>
<dbReference type="PDB" id="2DEP">
    <property type="method" value="X-ray"/>
    <property type="resolution" value="1.80 A"/>
    <property type="chains" value="A/B=41-387"/>
</dbReference>
<dbReference type="PDBsum" id="2DEP"/>
<dbReference type="SMR" id="P40942"/>
<dbReference type="CAZy" id="GH10">
    <property type="family name" value="Glycoside Hydrolase Family 10"/>
</dbReference>
<dbReference type="UniPathway" id="UPA00114"/>
<dbReference type="EvolutionaryTrace" id="P40942"/>
<dbReference type="GO" id="GO:0008810">
    <property type="term" value="F:cellulase activity"/>
    <property type="evidence" value="ECO:0007669"/>
    <property type="project" value="UniProtKB-EC"/>
</dbReference>
<dbReference type="GO" id="GO:0031176">
    <property type="term" value="F:endo-1,4-beta-xylanase activity"/>
    <property type="evidence" value="ECO:0007669"/>
    <property type="project" value="UniProtKB-EC"/>
</dbReference>
<dbReference type="GO" id="GO:0030245">
    <property type="term" value="P:cellulose catabolic process"/>
    <property type="evidence" value="ECO:0007669"/>
    <property type="project" value="UniProtKB-KW"/>
</dbReference>
<dbReference type="GO" id="GO:0045493">
    <property type="term" value="P:xylan catabolic process"/>
    <property type="evidence" value="ECO:0007669"/>
    <property type="project" value="UniProtKB-UniPathway"/>
</dbReference>
<dbReference type="Gene3D" id="3.20.20.80">
    <property type="entry name" value="Glycosidases"/>
    <property type="match status" value="1"/>
</dbReference>
<dbReference type="InterPro" id="IPR044846">
    <property type="entry name" value="GH10"/>
</dbReference>
<dbReference type="InterPro" id="IPR031158">
    <property type="entry name" value="GH10_AS"/>
</dbReference>
<dbReference type="InterPro" id="IPR001000">
    <property type="entry name" value="GH10_dom"/>
</dbReference>
<dbReference type="InterPro" id="IPR017853">
    <property type="entry name" value="Glycoside_hydrolase_SF"/>
</dbReference>
<dbReference type="PANTHER" id="PTHR31490:SF90">
    <property type="entry name" value="ENDO-1,4-BETA-XYLANASE A"/>
    <property type="match status" value="1"/>
</dbReference>
<dbReference type="PANTHER" id="PTHR31490">
    <property type="entry name" value="GLYCOSYL HYDROLASE"/>
    <property type="match status" value="1"/>
</dbReference>
<dbReference type="Pfam" id="PF00331">
    <property type="entry name" value="Glyco_hydro_10"/>
    <property type="match status" value="1"/>
</dbReference>
<dbReference type="PRINTS" id="PR00134">
    <property type="entry name" value="GLHYDRLASE10"/>
</dbReference>
<dbReference type="SMART" id="SM00633">
    <property type="entry name" value="Glyco_10"/>
    <property type="match status" value="1"/>
</dbReference>
<dbReference type="SUPFAM" id="SSF51445">
    <property type="entry name" value="(Trans)glycosidases"/>
    <property type="match status" value="1"/>
</dbReference>
<dbReference type="PROSITE" id="PS00591">
    <property type="entry name" value="GH10_1"/>
    <property type="match status" value="1"/>
</dbReference>
<dbReference type="PROSITE" id="PS51760">
    <property type="entry name" value="GH10_2"/>
    <property type="match status" value="1"/>
</dbReference>
<feature type="chain" id="PRO_0000184061" description="Thermostable celloxylanase">
    <location>
        <begin position="1"/>
        <end position="387"/>
    </location>
</feature>
<feature type="domain" description="GH10" evidence="2">
    <location>
        <begin position="41"/>
        <end position="382"/>
    </location>
</feature>
<feature type="active site" description="Proton donor" evidence="1">
    <location>
        <position position="185"/>
    </location>
</feature>
<feature type="active site" description="Nucleophile" evidence="3">
    <location>
        <position position="293"/>
    </location>
</feature>
<feature type="helix" evidence="5">
    <location>
        <begin position="47"/>
        <end position="50"/>
    </location>
</feature>
<feature type="turn" evidence="5">
    <location>
        <begin position="51"/>
        <end position="54"/>
    </location>
</feature>
<feature type="strand" evidence="5">
    <location>
        <begin position="57"/>
        <end position="61"/>
    </location>
</feature>
<feature type="helix" evidence="5">
    <location>
        <begin position="63"/>
        <end position="65"/>
    </location>
</feature>
<feature type="helix" evidence="5">
    <location>
        <begin position="68"/>
        <end position="77"/>
    </location>
</feature>
<feature type="strand" evidence="5">
    <location>
        <begin position="79"/>
        <end position="85"/>
    </location>
</feature>
<feature type="helix" evidence="5">
    <location>
        <begin position="89"/>
        <end position="92"/>
    </location>
</feature>
<feature type="helix" evidence="5">
    <location>
        <begin position="102"/>
        <end position="113"/>
    </location>
</feature>
<feature type="strand" evidence="5">
    <location>
        <begin position="117"/>
        <end position="128"/>
    </location>
</feature>
<feature type="helix" evidence="5">
    <location>
        <begin position="131"/>
        <end position="134"/>
    </location>
</feature>
<feature type="strand" evidence="5">
    <location>
        <begin position="139"/>
        <end position="141"/>
    </location>
</feature>
<feature type="helix" evidence="5">
    <location>
        <begin position="142"/>
        <end position="144"/>
    </location>
</feature>
<feature type="helix" evidence="5">
    <location>
        <begin position="148"/>
        <end position="173"/>
    </location>
</feature>
<feature type="turn" evidence="5">
    <location>
        <begin position="174"/>
        <end position="176"/>
    </location>
</feature>
<feature type="strand" evidence="5">
    <location>
        <begin position="179"/>
        <end position="184"/>
    </location>
</feature>
<feature type="helix" evidence="5">
    <location>
        <begin position="192"/>
        <end position="194"/>
    </location>
</feature>
<feature type="helix" evidence="5">
    <location>
        <begin position="199"/>
        <end position="204"/>
    </location>
</feature>
<feature type="helix" evidence="5">
    <location>
        <begin position="207"/>
        <end position="220"/>
    </location>
</feature>
<feature type="strand" evidence="5">
    <location>
        <begin position="222"/>
        <end position="231"/>
    </location>
</feature>
<feature type="helix" evidence="5">
    <location>
        <begin position="236"/>
        <end position="251"/>
    </location>
</feature>
<feature type="strand" evidence="5">
    <location>
        <begin position="258"/>
        <end position="261"/>
    </location>
</feature>
<feature type="strand" evidence="5">
    <location>
        <begin position="264"/>
        <end position="268"/>
    </location>
</feature>
<feature type="helix" evidence="5">
    <location>
        <begin position="272"/>
        <end position="283"/>
    </location>
</feature>
<feature type="turn" evidence="5">
    <location>
        <begin position="284"/>
        <end position="286"/>
    </location>
</feature>
<feature type="strand" evidence="5">
    <location>
        <begin position="288"/>
        <end position="299"/>
    </location>
</feature>
<feature type="helix" evidence="5">
    <location>
        <begin position="313"/>
        <end position="331"/>
    </location>
</feature>
<feature type="helix" evidence="5">
    <location>
        <begin position="332"/>
        <end position="336"/>
    </location>
</feature>
<feature type="strand" evidence="5">
    <location>
        <begin position="337"/>
        <end position="343"/>
    </location>
</feature>
<feature type="helix" evidence="5">
    <location>
        <begin position="351"/>
        <end position="353"/>
    </location>
</feature>
<feature type="strand" evidence="5">
    <location>
        <begin position="355"/>
        <end position="359"/>
    </location>
</feature>
<feature type="strand" evidence="5">
    <location>
        <begin position="364"/>
        <end position="366"/>
    </location>
</feature>
<feature type="helix" evidence="5">
    <location>
        <begin position="374"/>
        <end position="380"/>
    </location>
</feature>
<proteinExistence type="evidence at protein level"/>
<accession>P40942</accession>
<name>CEXY_THEST</name>
<sequence>MNKFLNKKWSLILTMGGIFLMATLSLIFATGKKAFNDQTSAEDIPSLAEAFRDYFPIGAAIEPGYTTGQIAELYKKHVNMLVAENAMKPASLQPTEGNFQWADADRIVQFAKENGMELRFHTLVWHNQTPTGFSLDKEGKPMVEETDPQKREENRKLLLQRLENYIRAVVLRYKDDIKSWDVVNEVIEPNDPGGMRNSPWYQITGTEYIEVAFRATREAGGSDIKLYINDYNTDDPVKRDILYELVKNLLEKGVPIDGVGHQTHIDIYNPPVERIIESIKKFAGLGLDNIITELDMSIYSWNDRSDYGDSIPDYILTLQAKRYQELFDALKENKDIVSAVVFWGISDKYSWLNGFPVKRTNAPLLFDRNFMPKPAFWAIVDPSRLRE</sequence>
<protein>
    <recommendedName>
        <fullName>Thermostable celloxylanase</fullName>
        <ecNumber>3.2.1.4</ecNumber>
        <ecNumber>3.2.1.8</ecNumber>
    </recommendedName>
</protein>
<keyword id="KW-0002">3D-structure</keyword>
<keyword id="KW-0119">Carbohydrate metabolism</keyword>
<keyword id="KW-0136">Cellulose degradation</keyword>
<keyword id="KW-0326">Glycosidase</keyword>
<keyword id="KW-0378">Hydrolase</keyword>
<keyword id="KW-0624">Polysaccharide degradation</keyword>
<keyword id="KW-0858">Xylan degradation</keyword>
<reference key="1">
    <citation type="journal article" date="1995" name="Biosci. Biotechnol. Biochem.">
        <title>Nucleotide sequence of the Clostridium stercorarium xynB gene encoding an extremely thermostable xylanase, and characterization of the translated product.</title>
        <authorList>
            <person name="Fukumura M."/>
            <person name="Sakka K."/>
            <person name="Shimada K."/>
            <person name="Ohmiya K."/>
        </authorList>
    </citation>
    <scope>NUCLEOTIDE SEQUENCE [GENOMIC DNA]</scope>
    <source>
        <strain>F-9</strain>
    </source>
</reference>
<evidence type="ECO:0000250" key="1"/>
<evidence type="ECO:0000255" key="2">
    <source>
        <dbReference type="PROSITE-ProRule" id="PRU01096"/>
    </source>
</evidence>
<evidence type="ECO:0000255" key="3">
    <source>
        <dbReference type="PROSITE-ProRule" id="PRU10061"/>
    </source>
</evidence>
<evidence type="ECO:0000305" key="4"/>
<evidence type="ECO:0007829" key="5">
    <source>
        <dbReference type="PDB" id="2DEP"/>
    </source>
</evidence>